<reference key="1">
    <citation type="journal article" date="2006" name="Mol. Microbiol.">
        <title>Role of pathogenicity island-associated integrases in the genome plasticity of uropathogenic Escherichia coli strain 536.</title>
        <authorList>
            <person name="Hochhut B."/>
            <person name="Wilde C."/>
            <person name="Balling G."/>
            <person name="Middendorf B."/>
            <person name="Dobrindt U."/>
            <person name="Brzuszkiewicz E."/>
            <person name="Gottschalk G."/>
            <person name="Carniel E."/>
            <person name="Hacker J."/>
        </authorList>
    </citation>
    <scope>NUCLEOTIDE SEQUENCE [LARGE SCALE GENOMIC DNA]</scope>
    <source>
        <strain>536 / UPEC</strain>
    </source>
</reference>
<comment type="subcellular location">
    <subcellularLocation>
        <location evidence="2">Cell membrane</location>
        <topology evidence="2">Lipid-anchor</topology>
    </subcellularLocation>
</comment>
<feature type="signal peptide" evidence="1">
    <location>
        <begin position="1"/>
        <end position="11"/>
    </location>
</feature>
<feature type="chain" id="PRO_0000268612" description="Uncharacterized lipoprotein YsaB">
    <location>
        <begin position="12"/>
        <end position="93"/>
    </location>
</feature>
<feature type="lipid moiety-binding region" description="N-palmitoyl cysteine" evidence="1">
    <location>
        <position position="12"/>
    </location>
</feature>
<feature type="lipid moiety-binding region" description="S-diacylglycerol cysteine" evidence="1">
    <location>
        <position position="12"/>
    </location>
</feature>
<organism>
    <name type="scientific">Escherichia coli O6:K15:H31 (strain 536 / UPEC)</name>
    <dbReference type="NCBI Taxonomy" id="362663"/>
    <lineage>
        <taxon>Bacteria</taxon>
        <taxon>Pseudomonadati</taxon>
        <taxon>Pseudomonadota</taxon>
        <taxon>Gammaproteobacteria</taxon>
        <taxon>Enterobacterales</taxon>
        <taxon>Enterobacteriaceae</taxon>
        <taxon>Escherichia</taxon>
    </lineage>
</organism>
<keyword id="KW-1003">Cell membrane</keyword>
<keyword id="KW-0449">Lipoprotein</keyword>
<keyword id="KW-0472">Membrane</keyword>
<keyword id="KW-0564">Palmitate</keyword>
<keyword id="KW-0732">Signal</keyword>
<sequence>MALMVLMALVGCSTPPPVQKAQRVKVDPLRSLNMEALCKDQAAKRYNTGEQKIDVTAFEQFQGSYEMRGYTFRKEQFVCSFDADGHFLHLSMR</sequence>
<accession>Q0TBP2</accession>
<gene>
    <name type="primary">ysaB</name>
    <name type="ordered locus">ECP_3663</name>
</gene>
<proteinExistence type="inferred from homology"/>
<dbReference type="EMBL" id="CP000247">
    <property type="protein sequence ID" value="ABG71637.1"/>
    <property type="molecule type" value="Genomic_DNA"/>
</dbReference>
<dbReference type="KEGG" id="ecp:ECP_3663"/>
<dbReference type="HOGENOM" id="CLU_162515_0_0_6"/>
<dbReference type="Proteomes" id="UP000009182">
    <property type="component" value="Chromosome"/>
</dbReference>
<dbReference type="GO" id="GO:0005886">
    <property type="term" value="C:plasma membrane"/>
    <property type="evidence" value="ECO:0007669"/>
    <property type="project" value="UniProtKB-SubCell"/>
</dbReference>
<dbReference type="InterPro" id="IPR025728">
    <property type="entry name" value="YsaB-like"/>
</dbReference>
<dbReference type="Pfam" id="PF13983">
    <property type="entry name" value="YsaB"/>
    <property type="match status" value="1"/>
</dbReference>
<protein>
    <recommendedName>
        <fullName>Uncharacterized lipoprotein YsaB</fullName>
    </recommendedName>
</protein>
<name>YSAB_ECOL5</name>
<evidence type="ECO:0000255" key="1"/>
<evidence type="ECO:0000305" key="2"/>